<proteinExistence type="evidence at transcript level"/>
<reference key="1">
    <citation type="journal article" date="2002" name="Gene Expr. Patterns">
        <title>Sexually dimorphic gene expression in the developing mouse gonad.</title>
        <authorList>
            <person name="Menke D.B."/>
            <person name="Page D.C."/>
        </authorList>
    </citation>
    <scope>NUCLEOTIDE SEQUENCE [MRNA]</scope>
    <scope>TISSUE SPECIFICITY</scope>
    <source>
        <strain>C57BL/6J</strain>
        <tissue>Testis</tissue>
    </source>
</reference>
<reference key="2">
    <citation type="journal article" date="2005" name="Science">
        <title>The transcriptional landscape of the mammalian genome.</title>
        <authorList>
            <person name="Carninci P."/>
            <person name="Kasukawa T."/>
            <person name="Katayama S."/>
            <person name="Gough J."/>
            <person name="Frith M.C."/>
            <person name="Maeda N."/>
            <person name="Oyama R."/>
            <person name="Ravasi T."/>
            <person name="Lenhard B."/>
            <person name="Wells C."/>
            <person name="Kodzius R."/>
            <person name="Shimokawa K."/>
            <person name="Bajic V.B."/>
            <person name="Brenner S.E."/>
            <person name="Batalov S."/>
            <person name="Forrest A.R."/>
            <person name="Zavolan M."/>
            <person name="Davis M.J."/>
            <person name="Wilming L.G."/>
            <person name="Aidinis V."/>
            <person name="Allen J.E."/>
            <person name="Ambesi-Impiombato A."/>
            <person name="Apweiler R."/>
            <person name="Aturaliya R.N."/>
            <person name="Bailey T.L."/>
            <person name="Bansal M."/>
            <person name="Baxter L."/>
            <person name="Beisel K.W."/>
            <person name="Bersano T."/>
            <person name="Bono H."/>
            <person name="Chalk A.M."/>
            <person name="Chiu K.P."/>
            <person name="Choudhary V."/>
            <person name="Christoffels A."/>
            <person name="Clutterbuck D.R."/>
            <person name="Crowe M.L."/>
            <person name="Dalla E."/>
            <person name="Dalrymple B.P."/>
            <person name="de Bono B."/>
            <person name="Della Gatta G."/>
            <person name="di Bernardo D."/>
            <person name="Down T."/>
            <person name="Engstrom P."/>
            <person name="Fagiolini M."/>
            <person name="Faulkner G."/>
            <person name="Fletcher C.F."/>
            <person name="Fukushima T."/>
            <person name="Furuno M."/>
            <person name="Futaki S."/>
            <person name="Gariboldi M."/>
            <person name="Georgii-Hemming P."/>
            <person name="Gingeras T.R."/>
            <person name="Gojobori T."/>
            <person name="Green R.E."/>
            <person name="Gustincich S."/>
            <person name="Harbers M."/>
            <person name="Hayashi Y."/>
            <person name="Hensch T.K."/>
            <person name="Hirokawa N."/>
            <person name="Hill D."/>
            <person name="Huminiecki L."/>
            <person name="Iacono M."/>
            <person name="Ikeo K."/>
            <person name="Iwama A."/>
            <person name="Ishikawa T."/>
            <person name="Jakt M."/>
            <person name="Kanapin A."/>
            <person name="Katoh M."/>
            <person name="Kawasawa Y."/>
            <person name="Kelso J."/>
            <person name="Kitamura H."/>
            <person name="Kitano H."/>
            <person name="Kollias G."/>
            <person name="Krishnan S.P."/>
            <person name="Kruger A."/>
            <person name="Kummerfeld S.K."/>
            <person name="Kurochkin I.V."/>
            <person name="Lareau L.F."/>
            <person name="Lazarevic D."/>
            <person name="Lipovich L."/>
            <person name="Liu J."/>
            <person name="Liuni S."/>
            <person name="McWilliam S."/>
            <person name="Madan Babu M."/>
            <person name="Madera M."/>
            <person name="Marchionni L."/>
            <person name="Matsuda H."/>
            <person name="Matsuzawa S."/>
            <person name="Miki H."/>
            <person name="Mignone F."/>
            <person name="Miyake S."/>
            <person name="Morris K."/>
            <person name="Mottagui-Tabar S."/>
            <person name="Mulder N."/>
            <person name="Nakano N."/>
            <person name="Nakauchi H."/>
            <person name="Ng P."/>
            <person name="Nilsson R."/>
            <person name="Nishiguchi S."/>
            <person name="Nishikawa S."/>
            <person name="Nori F."/>
            <person name="Ohara O."/>
            <person name="Okazaki Y."/>
            <person name="Orlando V."/>
            <person name="Pang K.C."/>
            <person name="Pavan W.J."/>
            <person name="Pavesi G."/>
            <person name="Pesole G."/>
            <person name="Petrovsky N."/>
            <person name="Piazza S."/>
            <person name="Reed J."/>
            <person name="Reid J.F."/>
            <person name="Ring B.Z."/>
            <person name="Ringwald M."/>
            <person name="Rost B."/>
            <person name="Ruan Y."/>
            <person name="Salzberg S.L."/>
            <person name="Sandelin A."/>
            <person name="Schneider C."/>
            <person name="Schoenbach C."/>
            <person name="Sekiguchi K."/>
            <person name="Semple C.A."/>
            <person name="Seno S."/>
            <person name="Sessa L."/>
            <person name="Sheng Y."/>
            <person name="Shibata Y."/>
            <person name="Shimada H."/>
            <person name="Shimada K."/>
            <person name="Silva D."/>
            <person name="Sinclair B."/>
            <person name="Sperling S."/>
            <person name="Stupka E."/>
            <person name="Sugiura K."/>
            <person name="Sultana R."/>
            <person name="Takenaka Y."/>
            <person name="Taki K."/>
            <person name="Tammoja K."/>
            <person name="Tan S.L."/>
            <person name="Tang S."/>
            <person name="Taylor M.S."/>
            <person name="Tegner J."/>
            <person name="Teichmann S.A."/>
            <person name="Ueda H.R."/>
            <person name="van Nimwegen E."/>
            <person name="Verardo R."/>
            <person name="Wei C.L."/>
            <person name="Yagi K."/>
            <person name="Yamanishi H."/>
            <person name="Zabarovsky E."/>
            <person name="Zhu S."/>
            <person name="Zimmer A."/>
            <person name="Hide W."/>
            <person name="Bult C."/>
            <person name="Grimmond S.M."/>
            <person name="Teasdale R.D."/>
            <person name="Liu E.T."/>
            <person name="Brusic V."/>
            <person name="Quackenbush J."/>
            <person name="Wahlestedt C."/>
            <person name="Mattick J.S."/>
            <person name="Hume D.A."/>
            <person name="Kai C."/>
            <person name="Sasaki D."/>
            <person name="Tomaru Y."/>
            <person name="Fukuda S."/>
            <person name="Kanamori-Katayama M."/>
            <person name="Suzuki M."/>
            <person name="Aoki J."/>
            <person name="Arakawa T."/>
            <person name="Iida J."/>
            <person name="Imamura K."/>
            <person name="Itoh M."/>
            <person name="Kato T."/>
            <person name="Kawaji H."/>
            <person name="Kawagashira N."/>
            <person name="Kawashima T."/>
            <person name="Kojima M."/>
            <person name="Kondo S."/>
            <person name="Konno H."/>
            <person name="Nakano K."/>
            <person name="Ninomiya N."/>
            <person name="Nishio T."/>
            <person name="Okada M."/>
            <person name="Plessy C."/>
            <person name="Shibata K."/>
            <person name="Shiraki T."/>
            <person name="Suzuki S."/>
            <person name="Tagami M."/>
            <person name="Waki K."/>
            <person name="Watahiki A."/>
            <person name="Okamura-Oho Y."/>
            <person name="Suzuki H."/>
            <person name="Kawai J."/>
            <person name="Hayashizaki Y."/>
        </authorList>
    </citation>
    <scope>NUCLEOTIDE SEQUENCE [LARGE SCALE MRNA]</scope>
    <source>
        <strain>C57BL/6J</strain>
        <tissue>Corpora quadrigemina</tissue>
    </source>
</reference>
<reference key="3">
    <citation type="journal article" date="2004" name="Genome Res.">
        <title>The status, quality, and expansion of the NIH full-length cDNA project: the Mammalian Gene Collection (MGC).</title>
        <authorList>
            <consortium name="The MGC Project Team"/>
        </authorList>
    </citation>
    <scope>NUCLEOTIDE SEQUENCE [LARGE SCALE MRNA]</scope>
    <source>
        <tissue>Testis</tissue>
    </source>
</reference>
<reference key="4">
    <citation type="journal article" date="2007" name="Int. J. Dev. Biol.">
        <title>Aard is specifically up-regulated in Sertoli cells during mouse testis differentiation.</title>
        <authorList>
            <person name="Svingen T."/>
            <person name="Beverdam A."/>
            <person name="Verma P."/>
            <person name="Wilhelm D."/>
            <person name="Koopman P."/>
        </authorList>
    </citation>
    <scope>TISSUE SPECIFICITY</scope>
    <scope>DEVELOPMENTAL STAGE</scope>
</reference>
<dbReference type="EMBL" id="AY134665">
    <property type="protein sequence ID" value="AAN08616.1"/>
    <property type="molecule type" value="mRNA"/>
</dbReference>
<dbReference type="EMBL" id="AK046414">
    <property type="protein sequence ID" value="BAC32717.1"/>
    <property type="molecule type" value="mRNA"/>
</dbReference>
<dbReference type="EMBL" id="BC089505">
    <property type="protein sequence ID" value="AAH89505.1"/>
    <property type="molecule type" value="mRNA"/>
</dbReference>
<dbReference type="CCDS" id="CCDS49603.1"/>
<dbReference type="RefSeq" id="NP_780712.2">
    <property type="nucleotide sequence ID" value="NM_175503.3"/>
</dbReference>
<dbReference type="SMR" id="Q811W1"/>
<dbReference type="BioGRID" id="232085">
    <property type="interactions" value="1"/>
</dbReference>
<dbReference type="FunCoup" id="Q811W1">
    <property type="interactions" value="3"/>
</dbReference>
<dbReference type="STRING" id="10090.ENSMUSP00000087479"/>
<dbReference type="SwissPalm" id="Q811W1"/>
<dbReference type="PaxDb" id="10090-ENSMUSP00000087479"/>
<dbReference type="ProteomicsDB" id="285625"/>
<dbReference type="Antibodypedia" id="74104">
    <property type="antibodies" value="1 antibodies from 1 providers"/>
</dbReference>
<dbReference type="Ensembl" id="ENSMUST00000090025.5">
    <property type="protein sequence ID" value="ENSMUSP00000087479.4"/>
    <property type="gene ID" value="ENSMUSG00000068522.5"/>
</dbReference>
<dbReference type="GeneID" id="239435"/>
<dbReference type="KEGG" id="mmu:239435"/>
<dbReference type="UCSC" id="uc029spb.1">
    <property type="organism name" value="mouse"/>
</dbReference>
<dbReference type="AGR" id="MGI:2181621"/>
<dbReference type="CTD" id="441376"/>
<dbReference type="MGI" id="MGI:2181621">
    <property type="gene designation" value="Aard"/>
</dbReference>
<dbReference type="VEuPathDB" id="HostDB:ENSMUSG00000068522"/>
<dbReference type="eggNOG" id="ENOG502SG9F">
    <property type="taxonomic scope" value="Eukaryota"/>
</dbReference>
<dbReference type="GeneTree" id="ENSGT00390000007815"/>
<dbReference type="HOGENOM" id="CLU_142929_0_0_1"/>
<dbReference type="InParanoid" id="Q811W1"/>
<dbReference type="OMA" id="ELEMAWE"/>
<dbReference type="OrthoDB" id="9948935at2759"/>
<dbReference type="PhylomeDB" id="Q811W1"/>
<dbReference type="TreeFam" id="TF339066"/>
<dbReference type="BioGRID-ORCS" id="239435">
    <property type="hits" value="2 hits in 76 CRISPR screens"/>
</dbReference>
<dbReference type="ChiTaRS" id="Aard">
    <property type="organism name" value="mouse"/>
</dbReference>
<dbReference type="PRO" id="PR:Q811W1"/>
<dbReference type="Proteomes" id="UP000000589">
    <property type="component" value="Chromosome 15"/>
</dbReference>
<dbReference type="RNAct" id="Q811W1">
    <property type="molecule type" value="protein"/>
</dbReference>
<dbReference type="Bgee" id="ENSMUSG00000068522">
    <property type="expression patterns" value="Expressed in gonadal ridge and 155 other cell types or tissues"/>
</dbReference>
<dbReference type="GO" id="GO:0033574">
    <property type="term" value="P:response to testosterone"/>
    <property type="evidence" value="ECO:0000314"/>
    <property type="project" value="MGI"/>
</dbReference>
<dbReference type="InterPro" id="IPR051771">
    <property type="entry name" value="FAM167_domain"/>
</dbReference>
<dbReference type="PANTHER" id="PTHR32289:SF2">
    <property type="entry name" value="ALANINE AND ARGININE-RICH DOMAIN-CONTAINING PROTEIN"/>
    <property type="match status" value="1"/>
</dbReference>
<dbReference type="PANTHER" id="PTHR32289">
    <property type="entry name" value="PROTEIN FAM167A"/>
    <property type="match status" value="1"/>
</dbReference>
<keyword id="KW-1185">Reference proteome</keyword>
<accession>Q811W1</accession>
<accession>Q8BL45</accession>
<name>AARD_MOUSE</name>
<gene>
    <name type="primary">Aard</name>
</gene>
<comment type="tissue specificity">
    <text evidence="2 3">Preferentially expressed in testis both in embryo and adult. Expressed at much lower level in other tissues.</text>
</comment>
<comment type="developmental stage">
    <text evidence="3">Expressed early in testis differentiation specifically in Sertoli cells of the developing testis cords.</text>
</comment>
<evidence type="ECO:0000256" key="1">
    <source>
        <dbReference type="SAM" id="MobiDB-lite"/>
    </source>
</evidence>
<evidence type="ECO:0000269" key="2">
    <source>
    </source>
</evidence>
<evidence type="ECO:0000269" key="3">
    <source>
    </source>
</evidence>
<evidence type="ECO:0000305" key="4"/>
<feature type="chain" id="PRO_0000337037" description="Alanine- and arginine-rich domain-containing protein">
    <location>
        <begin position="1"/>
        <end position="167"/>
    </location>
</feature>
<feature type="region of interest" description="Disordered" evidence="1">
    <location>
        <begin position="140"/>
        <end position="167"/>
    </location>
</feature>
<feature type="sequence conflict" description="In Ref. 2; BAC32717." evidence="4" ref="2">
    <original>Q</original>
    <variation>H</variation>
    <location>
        <position position="71"/>
    </location>
</feature>
<sequence length="167" mass="18923">MGLGDYSHCRQRMSRGLYGVSGRAALWSPVFHPVHRMPCGTWRIGIEVPEHVRASSPVLEHLRRQLERAFQRAAARGRARRAREAVAAVAAAAAAAREERSRTRMECALARLRAELLELRFQNHQLARTLLDLNMKMQQLKKRQDQELASKPQSPQDKEMNSECGSA</sequence>
<protein>
    <recommendedName>
        <fullName>Alanine- and arginine-rich domain-containing protein</fullName>
    </recommendedName>
</protein>
<organism>
    <name type="scientific">Mus musculus</name>
    <name type="common">Mouse</name>
    <dbReference type="NCBI Taxonomy" id="10090"/>
    <lineage>
        <taxon>Eukaryota</taxon>
        <taxon>Metazoa</taxon>
        <taxon>Chordata</taxon>
        <taxon>Craniata</taxon>
        <taxon>Vertebrata</taxon>
        <taxon>Euteleostomi</taxon>
        <taxon>Mammalia</taxon>
        <taxon>Eutheria</taxon>
        <taxon>Euarchontoglires</taxon>
        <taxon>Glires</taxon>
        <taxon>Rodentia</taxon>
        <taxon>Myomorpha</taxon>
        <taxon>Muroidea</taxon>
        <taxon>Muridae</taxon>
        <taxon>Murinae</taxon>
        <taxon>Mus</taxon>
        <taxon>Mus</taxon>
    </lineage>
</organism>